<comment type="function">
    <text evidence="1">Component of the MICOS complex, a large protein complex of the mitochondrial inner membrane that plays crucial roles in the maintenance of crista junctions, inner membrane architecture, and formation of contact sites to the outer membrane.</text>
</comment>
<comment type="subunit">
    <text evidence="1">Component of the mitochondrial contact site and cristae organizing system (MICOS) complex.</text>
</comment>
<comment type="subcellular location">
    <subcellularLocation>
        <location evidence="1">Mitochondrion inner membrane</location>
        <topology evidence="3">Multi-pass membrane protein</topology>
    </subcellularLocation>
</comment>
<comment type="similarity">
    <text evidence="3">Belongs to the apolipoprotein O/MICOS complex subunit Mic27 family.</text>
</comment>
<name>MIC27_KLULA</name>
<accession>Q6CTE6</accession>
<evidence type="ECO:0000250" key="1"/>
<evidence type="ECO:0000255" key="2"/>
<evidence type="ECO:0000305" key="3"/>
<feature type="chain" id="PRO_0000399834" description="MICOS complex subunit MIC27">
    <location>
        <begin position="1"/>
        <end position="240"/>
    </location>
</feature>
<feature type="topological domain" description="Mitochondrial intermembrane" evidence="2">
    <location>
        <begin position="1"/>
        <end position="100"/>
    </location>
</feature>
<feature type="transmembrane region" description="Helical" evidence="2">
    <location>
        <begin position="101"/>
        <end position="120"/>
    </location>
</feature>
<feature type="topological domain" description="Mitochondrial matrix" evidence="2">
    <location>
        <begin position="121"/>
        <end position="149"/>
    </location>
</feature>
<feature type="transmembrane region" description="Helical" evidence="2">
    <location>
        <begin position="150"/>
        <end position="169"/>
    </location>
</feature>
<feature type="topological domain" description="Mitochondrial intermembrane" evidence="2">
    <location>
        <begin position="170"/>
        <end position="240"/>
    </location>
</feature>
<organism>
    <name type="scientific">Kluyveromyces lactis (strain ATCC 8585 / CBS 2359 / DSM 70799 / NBRC 1267 / NRRL Y-1140 / WM37)</name>
    <name type="common">Yeast</name>
    <name type="synonym">Candida sphaerica</name>
    <dbReference type="NCBI Taxonomy" id="284590"/>
    <lineage>
        <taxon>Eukaryota</taxon>
        <taxon>Fungi</taxon>
        <taxon>Dikarya</taxon>
        <taxon>Ascomycota</taxon>
        <taxon>Saccharomycotina</taxon>
        <taxon>Saccharomycetes</taxon>
        <taxon>Saccharomycetales</taxon>
        <taxon>Saccharomycetaceae</taxon>
        <taxon>Kluyveromyces</taxon>
    </lineage>
</organism>
<protein>
    <recommendedName>
        <fullName>MICOS complex subunit MIC27</fullName>
    </recommendedName>
</protein>
<dbReference type="EMBL" id="CR382123">
    <property type="protein sequence ID" value="CAH01644.1"/>
    <property type="molecule type" value="Genomic_DNA"/>
</dbReference>
<dbReference type="RefSeq" id="XP_452793.1">
    <property type="nucleotide sequence ID" value="XM_452793.1"/>
</dbReference>
<dbReference type="SMR" id="Q6CTE6"/>
<dbReference type="FunCoup" id="Q6CTE6">
    <property type="interactions" value="55"/>
</dbReference>
<dbReference type="STRING" id="284590.Q6CTE6"/>
<dbReference type="PaxDb" id="284590-Q6CTE6"/>
<dbReference type="KEGG" id="kla:KLLA0_C13299g"/>
<dbReference type="eggNOG" id="ENOG502S31N">
    <property type="taxonomic scope" value="Eukaryota"/>
</dbReference>
<dbReference type="HOGENOM" id="CLU_093584_0_0_1"/>
<dbReference type="InParanoid" id="Q6CTE6"/>
<dbReference type="OMA" id="KYKVCKG"/>
<dbReference type="Proteomes" id="UP000000598">
    <property type="component" value="Chromosome C"/>
</dbReference>
<dbReference type="GO" id="GO:0005743">
    <property type="term" value="C:mitochondrial inner membrane"/>
    <property type="evidence" value="ECO:0007669"/>
    <property type="project" value="UniProtKB-SubCell"/>
</dbReference>
<reference key="1">
    <citation type="journal article" date="2004" name="Nature">
        <title>Genome evolution in yeasts.</title>
        <authorList>
            <person name="Dujon B."/>
            <person name="Sherman D."/>
            <person name="Fischer G."/>
            <person name="Durrens P."/>
            <person name="Casaregola S."/>
            <person name="Lafontaine I."/>
            <person name="de Montigny J."/>
            <person name="Marck C."/>
            <person name="Neuveglise C."/>
            <person name="Talla E."/>
            <person name="Goffard N."/>
            <person name="Frangeul L."/>
            <person name="Aigle M."/>
            <person name="Anthouard V."/>
            <person name="Babour A."/>
            <person name="Barbe V."/>
            <person name="Barnay S."/>
            <person name="Blanchin S."/>
            <person name="Beckerich J.-M."/>
            <person name="Beyne E."/>
            <person name="Bleykasten C."/>
            <person name="Boisrame A."/>
            <person name="Boyer J."/>
            <person name="Cattolico L."/>
            <person name="Confanioleri F."/>
            <person name="de Daruvar A."/>
            <person name="Despons L."/>
            <person name="Fabre E."/>
            <person name="Fairhead C."/>
            <person name="Ferry-Dumazet H."/>
            <person name="Groppi A."/>
            <person name="Hantraye F."/>
            <person name="Hennequin C."/>
            <person name="Jauniaux N."/>
            <person name="Joyet P."/>
            <person name="Kachouri R."/>
            <person name="Kerrest A."/>
            <person name="Koszul R."/>
            <person name="Lemaire M."/>
            <person name="Lesur I."/>
            <person name="Ma L."/>
            <person name="Muller H."/>
            <person name="Nicaud J.-M."/>
            <person name="Nikolski M."/>
            <person name="Oztas S."/>
            <person name="Ozier-Kalogeropoulos O."/>
            <person name="Pellenz S."/>
            <person name="Potier S."/>
            <person name="Richard G.-F."/>
            <person name="Straub M.-L."/>
            <person name="Suleau A."/>
            <person name="Swennen D."/>
            <person name="Tekaia F."/>
            <person name="Wesolowski-Louvel M."/>
            <person name="Westhof E."/>
            <person name="Wirth B."/>
            <person name="Zeniou-Meyer M."/>
            <person name="Zivanovic Y."/>
            <person name="Bolotin-Fukuhara M."/>
            <person name="Thierry A."/>
            <person name="Bouchier C."/>
            <person name="Caudron B."/>
            <person name="Scarpelli C."/>
            <person name="Gaillardin C."/>
            <person name="Weissenbach J."/>
            <person name="Wincker P."/>
            <person name="Souciet J.-L."/>
        </authorList>
    </citation>
    <scope>NUCLEOTIDE SEQUENCE [LARGE SCALE GENOMIC DNA]</scope>
    <source>
        <strain>ATCC 8585 / CBS 2359 / DSM 70799 / NBRC 1267 / NRRL Y-1140 / WM37</strain>
    </source>
</reference>
<gene>
    <name type="primary">MIC27</name>
    <name type="ordered locus">KLLA0C13299g</name>
</gene>
<keyword id="KW-0472">Membrane</keyword>
<keyword id="KW-0496">Mitochondrion</keyword>
<keyword id="KW-0999">Mitochondrion inner membrane</keyword>
<keyword id="KW-1185">Reference proteome</keyword>
<keyword id="KW-0812">Transmembrane</keyword>
<keyword id="KW-1133">Transmembrane helix</keyword>
<proteinExistence type="inferred from homology"/>
<sequence>MGRDFYGEIRDEVIKKGEPLVPEFIKNNSDIKTTTLPNGNSVMEPVAITEWVNKVRRKVIHNKEYVEAEIETQKSAARNEVETIKQYWRDNVFTDRKEVDEHIVTASVFALGAWFFGSVVSSKRNWGFQSPWNSDKSGILKRTPSQFSKLLTNLPVRLTLPWILAGTVYSQLTPNTWNNALSAIKRDVLPKDVVEQSSALYDDIIEKGLKIQLRSLNQSAHENLQASICSIRETIAENVK</sequence>